<proteinExistence type="evidence at protein level"/>
<accession>P49814</accession>
<dbReference type="EC" id="1.1.1.37" evidence="1"/>
<dbReference type="EMBL" id="U05257">
    <property type="protein sequence ID" value="AAA96343.1"/>
    <property type="molecule type" value="Genomic_DNA"/>
</dbReference>
<dbReference type="EMBL" id="AF008220">
    <property type="protein sequence ID" value="AAC00347.1"/>
    <property type="molecule type" value="Genomic_DNA"/>
</dbReference>
<dbReference type="EMBL" id="AL009126">
    <property type="protein sequence ID" value="CAB14872.1"/>
    <property type="molecule type" value="Genomic_DNA"/>
</dbReference>
<dbReference type="PIR" id="I40383">
    <property type="entry name" value="I40383"/>
</dbReference>
<dbReference type="RefSeq" id="NP_390790.1">
    <property type="nucleotide sequence ID" value="NC_000964.3"/>
</dbReference>
<dbReference type="RefSeq" id="WP_003229437.1">
    <property type="nucleotide sequence ID" value="NZ_OZ025638.1"/>
</dbReference>
<dbReference type="SMR" id="P49814"/>
<dbReference type="FunCoup" id="P49814">
    <property type="interactions" value="452"/>
</dbReference>
<dbReference type="IntAct" id="P49814">
    <property type="interactions" value="2"/>
</dbReference>
<dbReference type="MINT" id="P49814"/>
<dbReference type="STRING" id="224308.BSU29120"/>
<dbReference type="iPTMnet" id="P49814"/>
<dbReference type="jPOST" id="P49814"/>
<dbReference type="PaxDb" id="224308-BSU29120"/>
<dbReference type="EnsemblBacteria" id="CAB14872">
    <property type="protein sequence ID" value="CAB14872"/>
    <property type="gene ID" value="BSU_29120"/>
</dbReference>
<dbReference type="GeneID" id="937385"/>
<dbReference type="KEGG" id="bsu:BSU29120"/>
<dbReference type="PATRIC" id="fig|224308.179.peg.3162"/>
<dbReference type="eggNOG" id="COG0039">
    <property type="taxonomic scope" value="Bacteria"/>
</dbReference>
<dbReference type="InParanoid" id="P49814"/>
<dbReference type="OrthoDB" id="9802969at2"/>
<dbReference type="PhylomeDB" id="P49814"/>
<dbReference type="BioCyc" id="BSUB:BSU29120-MONOMER"/>
<dbReference type="Proteomes" id="UP000001570">
    <property type="component" value="Chromosome"/>
</dbReference>
<dbReference type="GO" id="GO:0005737">
    <property type="term" value="C:cytoplasm"/>
    <property type="evidence" value="ECO:0000318"/>
    <property type="project" value="GO_Central"/>
</dbReference>
<dbReference type="GO" id="GO:0030060">
    <property type="term" value="F:L-malate dehydrogenase (NAD+) activity"/>
    <property type="evidence" value="ECO:0000318"/>
    <property type="project" value="GO_Central"/>
</dbReference>
<dbReference type="GO" id="GO:0019752">
    <property type="term" value="P:carboxylic acid metabolic process"/>
    <property type="evidence" value="ECO:0007669"/>
    <property type="project" value="InterPro"/>
</dbReference>
<dbReference type="GO" id="GO:0006099">
    <property type="term" value="P:tricarboxylic acid cycle"/>
    <property type="evidence" value="ECO:0007669"/>
    <property type="project" value="UniProtKB-UniRule"/>
</dbReference>
<dbReference type="CDD" id="cd01339">
    <property type="entry name" value="LDH-like_MDH"/>
    <property type="match status" value="1"/>
</dbReference>
<dbReference type="FunFam" id="3.40.50.720:FF:000018">
    <property type="entry name" value="Malate dehydrogenase"/>
    <property type="match status" value="1"/>
</dbReference>
<dbReference type="FunFam" id="3.90.110.10:FF:000004">
    <property type="entry name" value="Malate dehydrogenase"/>
    <property type="match status" value="1"/>
</dbReference>
<dbReference type="Gene3D" id="3.90.110.10">
    <property type="entry name" value="Lactate dehydrogenase/glycoside hydrolase, family 4, C-terminal"/>
    <property type="match status" value="1"/>
</dbReference>
<dbReference type="Gene3D" id="3.40.50.720">
    <property type="entry name" value="NAD(P)-binding Rossmann-like Domain"/>
    <property type="match status" value="1"/>
</dbReference>
<dbReference type="HAMAP" id="MF_00487">
    <property type="entry name" value="Malate_dehydrog_3"/>
    <property type="match status" value="1"/>
</dbReference>
<dbReference type="InterPro" id="IPR001557">
    <property type="entry name" value="L-lactate/malate_DH"/>
</dbReference>
<dbReference type="InterPro" id="IPR022383">
    <property type="entry name" value="Lactate/malate_DH_C"/>
</dbReference>
<dbReference type="InterPro" id="IPR001236">
    <property type="entry name" value="Lactate/malate_DH_N"/>
</dbReference>
<dbReference type="InterPro" id="IPR015955">
    <property type="entry name" value="Lactate_DH/Glyco_Ohase_4_C"/>
</dbReference>
<dbReference type="InterPro" id="IPR011275">
    <property type="entry name" value="Malate_DH_type3"/>
</dbReference>
<dbReference type="InterPro" id="IPR036291">
    <property type="entry name" value="NAD(P)-bd_dom_sf"/>
</dbReference>
<dbReference type="NCBIfam" id="TIGR01763">
    <property type="entry name" value="MalateDH_bact"/>
    <property type="match status" value="1"/>
</dbReference>
<dbReference type="NCBIfam" id="NF004863">
    <property type="entry name" value="PRK06223.1"/>
    <property type="match status" value="1"/>
</dbReference>
<dbReference type="PANTHER" id="PTHR43128">
    <property type="entry name" value="L-2-HYDROXYCARBOXYLATE DEHYDROGENASE (NAD(P)(+))"/>
    <property type="match status" value="1"/>
</dbReference>
<dbReference type="PANTHER" id="PTHR43128:SF16">
    <property type="entry name" value="L-LACTATE DEHYDROGENASE"/>
    <property type="match status" value="1"/>
</dbReference>
<dbReference type="Pfam" id="PF02866">
    <property type="entry name" value="Ldh_1_C"/>
    <property type="match status" value="1"/>
</dbReference>
<dbReference type="Pfam" id="PF00056">
    <property type="entry name" value="Ldh_1_N"/>
    <property type="match status" value="1"/>
</dbReference>
<dbReference type="PIRSF" id="PIRSF000102">
    <property type="entry name" value="Lac_mal_DH"/>
    <property type="match status" value="1"/>
</dbReference>
<dbReference type="PRINTS" id="PR00086">
    <property type="entry name" value="LLDHDRGNASE"/>
</dbReference>
<dbReference type="SUPFAM" id="SSF56327">
    <property type="entry name" value="LDH C-terminal domain-like"/>
    <property type="match status" value="1"/>
</dbReference>
<dbReference type="SUPFAM" id="SSF51735">
    <property type="entry name" value="NAD(P)-binding Rossmann-fold domains"/>
    <property type="match status" value="1"/>
</dbReference>
<evidence type="ECO:0000255" key="1">
    <source>
        <dbReference type="HAMAP-Rule" id="MF_00487"/>
    </source>
</evidence>
<evidence type="ECO:0000269" key="2">
    <source>
    </source>
</evidence>
<evidence type="ECO:0000269" key="3">
    <source>
    </source>
</evidence>
<name>MDH_BACSU</name>
<gene>
    <name type="primary">mdh</name>
    <name type="synonym">citH</name>
    <name type="ordered locus">BSU29120</name>
</gene>
<reference key="1">
    <citation type="journal article" date="1994" name="J. Bacteriol.">
        <title>Identification of two distinct Bacillus subtilis citrate synthase genes.</title>
        <authorList>
            <person name="Jin S."/>
            <person name="Sonenshein A.L."/>
        </authorList>
    </citation>
    <scope>PRELIMINARY PROTEIN SEQUENCE OF 2-312</scope>
    <source>
        <strain>168 / SMY</strain>
    </source>
</reference>
<reference key="2">
    <citation type="journal article" date="1996" name="J. Bacteriol.">
        <title>A Bacillus subtilis malate dehydrogenase gene.</title>
        <authorList>
            <person name="Jin S."/>
            <person name="de Jesus-Berrios M."/>
            <person name="Sonenshein A.L."/>
        </authorList>
    </citation>
    <scope>NUCLEOTIDE SEQUENCE [GENOMIC DNA]</scope>
    <source>
        <strain>168 / SMY</strain>
    </source>
</reference>
<reference key="3">
    <citation type="journal article" date="1997" name="Microbiology">
        <title>Sequencing and functional annotation of the Bacillus subtilis genes in the 200 kb rrnB-dnaB region.</title>
        <authorList>
            <person name="Lapidus A."/>
            <person name="Galleron N."/>
            <person name="Sorokin A."/>
            <person name="Ehrlich S.D."/>
        </authorList>
    </citation>
    <scope>NUCLEOTIDE SEQUENCE [GENOMIC DNA]</scope>
    <source>
        <strain>168</strain>
    </source>
</reference>
<reference key="4">
    <citation type="journal article" date="1997" name="Nature">
        <title>The complete genome sequence of the Gram-positive bacterium Bacillus subtilis.</title>
        <authorList>
            <person name="Kunst F."/>
            <person name="Ogasawara N."/>
            <person name="Moszer I."/>
            <person name="Albertini A.M."/>
            <person name="Alloni G."/>
            <person name="Azevedo V."/>
            <person name="Bertero M.G."/>
            <person name="Bessieres P."/>
            <person name="Bolotin A."/>
            <person name="Borchert S."/>
            <person name="Borriss R."/>
            <person name="Boursier L."/>
            <person name="Brans A."/>
            <person name="Braun M."/>
            <person name="Brignell S.C."/>
            <person name="Bron S."/>
            <person name="Brouillet S."/>
            <person name="Bruschi C.V."/>
            <person name="Caldwell B."/>
            <person name="Capuano V."/>
            <person name="Carter N.M."/>
            <person name="Choi S.-K."/>
            <person name="Codani J.-J."/>
            <person name="Connerton I.F."/>
            <person name="Cummings N.J."/>
            <person name="Daniel R.A."/>
            <person name="Denizot F."/>
            <person name="Devine K.M."/>
            <person name="Duesterhoeft A."/>
            <person name="Ehrlich S.D."/>
            <person name="Emmerson P.T."/>
            <person name="Entian K.-D."/>
            <person name="Errington J."/>
            <person name="Fabret C."/>
            <person name="Ferrari E."/>
            <person name="Foulger D."/>
            <person name="Fritz C."/>
            <person name="Fujita M."/>
            <person name="Fujita Y."/>
            <person name="Fuma S."/>
            <person name="Galizzi A."/>
            <person name="Galleron N."/>
            <person name="Ghim S.-Y."/>
            <person name="Glaser P."/>
            <person name="Goffeau A."/>
            <person name="Golightly E.J."/>
            <person name="Grandi G."/>
            <person name="Guiseppi G."/>
            <person name="Guy B.J."/>
            <person name="Haga K."/>
            <person name="Haiech J."/>
            <person name="Harwood C.R."/>
            <person name="Henaut A."/>
            <person name="Hilbert H."/>
            <person name="Holsappel S."/>
            <person name="Hosono S."/>
            <person name="Hullo M.-F."/>
            <person name="Itaya M."/>
            <person name="Jones L.-M."/>
            <person name="Joris B."/>
            <person name="Karamata D."/>
            <person name="Kasahara Y."/>
            <person name="Klaerr-Blanchard M."/>
            <person name="Klein C."/>
            <person name="Kobayashi Y."/>
            <person name="Koetter P."/>
            <person name="Koningstein G."/>
            <person name="Krogh S."/>
            <person name="Kumano M."/>
            <person name="Kurita K."/>
            <person name="Lapidus A."/>
            <person name="Lardinois S."/>
            <person name="Lauber J."/>
            <person name="Lazarevic V."/>
            <person name="Lee S.-M."/>
            <person name="Levine A."/>
            <person name="Liu H."/>
            <person name="Masuda S."/>
            <person name="Mauel C."/>
            <person name="Medigue C."/>
            <person name="Medina N."/>
            <person name="Mellado R.P."/>
            <person name="Mizuno M."/>
            <person name="Moestl D."/>
            <person name="Nakai S."/>
            <person name="Noback M."/>
            <person name="Noone D."/>
            <person name="O'Reilly M."/>
            <person name="Ogawa K."/>
            <person name="Ogiwara A."/>
            <person name="Oudega B."/>
            <person name="Park S.-H."/>
            <person name="Parro V."/>
            <person name="Pohl T.M."/>
            <person name="Portetelle D."/>
            <person name="Porwollik S."/>
            <person name="Prescott A.M."/>
            <person name="Presecan E."/>
            <person name="Pujic P."/>
            <person name="Purnelle B."/>
            <person name="Rapoport G."/>
            <person name="Rey M."/>
            <person name="Reynolds S."/>
            <person name="Rieger M."/>
            <person name="Rivolta C."/>
            <person name="Rocha E."/>
            <person name="Roche B."/>
            <person name="Rose M."/>
            <person name="Sadaie Y."/>
            <person name="Sato T."/>
            <person name="Scanlan E."/>
            <person name="Schleich S."/>
            <person name="Schroeter R."/>
            <person name="Scoffone F."/>
            <person name="Sekiguchi J."/>
            <person name="Sekowska A."/>
            <person name="Seror S.J."/>
            <person name="Serror P."/>
            <person name="Shin B.-S."/>
            <person name="Soldo B."/>
            <person name="Sorokin A."/>
            <person name="Tacconi E."/>
            <person name="Takagi T."/>
            <person name="Takahashi H."/>
            <person name="Takemaru K."/>
            <person name="Takeuchi M."/>
            <person name="Tamakoshi A."/>
            <person name="Tanaka T."/>
            <person name="Terpstra P."/>
            <person name="Tognoni A."/>
            <person name="Tosato V."/>
            <person name="Uchiyama S."/>
            <person name="Vandenbol M."/>
            <person name="Vannier F."/>
            <person name="Vassarotti A."/>
            <person name="Viari A."/>
            <person name="Wambutt R."/>
            <person name="Wedler E."/>
            <person name="Wedler H."/>
            <person name="Weitzenegger T."/>
            <person name="Winters P."/>
            <person name="Wipat A."/>
            <person name="Yamamoto H."/>
            <person name="Yamane K."/>
            <person name="Yasumoto K."/>
            <person name="Yata K."/>
            <person name="Yoshida K."/>
            <person name="Yoshikawa H.-F."/>
            <person name="Zumstein E."/>
            <person name="Yoshikawa H."/>
            <person name="Danchin A."/>
        </authorList>
    </citation>
    <scope>NUCLEOTIDE SEQUENCE [LARGE SCALE GENOMIC DNA]</scope>
    <source>
        <strain>168</strain>
    </source>
</reference>
<reference key="5">
    <citation type="journal article" date="1997" name="Electrophoresis">
        <title>First steps from a two-dimensional protein index towards a response-regulation map for Bacillus subtilis.</title>
        <authorList>
            <person name="Antelmann H."/>
            <person name="Bernhardt J."/>
            <person name="Schmid R."/>
            <person name="Mach H."/>
            <person name="Voelker U."/>
            <person name="Hecker M."/>
        </authorList>
    </citation>
    <scope>PROTEIN SEQUENCE OF 2-16</scope>
    <source>
        <strain>168 / IS58</strain>
    </source>
</reference>
<reference key="6">
    <citation type="journal article" date="2007" name="Mol. Cell. Proteomics">
        <title>The serine/threonine/tyrosine phosphoproteome of the model bacterium Bacillus subtilis.</title>
        <authorList>
            <person name="Macek B."/>
            <person name="Mijakovic I."/>
            <person name="Olsen J.V."/>
            <person name="Gnad F."/>
            <person name="Kumar C."/>
            <person name="Jensen P.R."/>
            <person name="Mann M."/>
        </authorList>
    </citation>
    <scope>PHOSPHORYLATION [LARGE SCALE ANALYSIS] AT SER-149</scope>
    <scope>IDENTIFICATION BY MASS SPECTROMETRY</scope>
    <source>
        <strain>168</strain>
    </source>
</reference>
<feature type="initiator methionine" description="Removed" evidence="3">
    <location>
        <position position="1"/>
    </location>
</feature>
<feature type="chain" id="PRO_0000113434" description="Malate dehydrogenase">
    <location>
        <begin position="2"/>
        <end position="312"/>
    </location>
</feature>
<feature type="active site" description="Proton acceptor" evidence="1">
    <location>
        <position position="180"/>
    </location>
</feature>
<feature type="binding site" evidence="1">
    <location>
        <begin position="12"/>
        <end position="17"/>
    </location>
    <ligand>
        <name>NAD(+)</name>
        <dbReference type="ChEBI" id="CHEBI:57540"/>
    </ligand>
</feature>
<feature type="binding site" evidence="1">
    <location>
        <position position="36"/>
    </location>
    <ligand>
        <name>NAD(+)</name>
        <dbReference type="ChEBI" id="CHEBI:57540"/>
    </ligand>
</feature>
<feature type="binding site" evidence="1">
    <location>
        <position position="87"/>
    </location>
    <ligand>
        <name>substrate</name>
    </ligand>
</feature>
<feature type="binding site" evidence="1">
    <location>
        <position position="93"/>
    </location>
    <ligand>
        <name>substrate</name>
    </ligand>
</feature>
<feature type="binding site" evidence="1">
    <location>
        <position position="100"/>
    </location>
    <ligand>
        <name>NAD(+)</name>
        <dbReference type="ChEBI" id="CHEBI:57540"/>
    </ligand>
</feature>
<feature type="binding site" evidence="1">
    <location>
        <begin position="123"/>
        <end position="125"/>
    </location>
    <ligand>
        <name>NAD(+)</name>
        <dbReference type="ChEBI" id="CHEBI:57540"/>
    </ligand>
</feature>
<feature type="binding site" evidence="1">
    <location>
        <position position="125"/>
    </location>
    <ligand>
        <name>substrate</name>
    </ligand>
</feature>
<feature type="binding site" evidence="1">
    <location>
        <position position="156"/>
    </location>
    <ligand>
        <name>substrate</name>
    </ligand>
</feature>
<feature type="modified residue" description="Phosphoserine" evidence="1 2">
    <location>
        <position position="149"/>
    </location>
</feature>
<protein>
    <recommendedName>
        <fullName evidence="1">Malate dehydrogenase</fullName>
        <ecNumber evidence="1">1.1.1.37</ecNumber>
    </recommendedName>
    <alternativeName>
        <fullName>Vegetative protein 69</fullName>
        <shortName>VEG69</shortName>
    </alternativeName>
</protein>
<keyword id="KW-0903">Direct protein sequencing</keyword>
<keyword id="KW-0520">NAD</keyword>
<keyword id="KW-0560">Oxidoreductase</keyword>
<keyword id="KW-0597">Phosphoprotein</keyword>
<keyword id="KW-1185">Reference proteome</keyword>
<keyword id="KW-0816">Tricarboxylic acid cycle</keyword>
<organism>
    <name type="scientific">Bacillus subtilis (strain 168)</name>
    <dbReference type="NCBI Taxonomy" id="224308"/>
    <lineage>
        <taxon>Bacteria</taxon>
        <taxon>Bacillati</taxon>
        <taxon>Bacillota</taxon>
        <taxon>Bacilli</taxon>
        <taxon>Bacillales</taxon>
        <taxon>Bacillaceae</taxon>
        <taxon>Bacillus</taxon>
    </lineage>
</organism>
<sequence>MGNTRKKVSVIGAGFTGATTAFLIAQKELADVVLVDIPQLENPTKGKALDMLEASPVQGFDAKITGTSNYEDTAGSDIVVITAGIARKPGMSRDDLVSTNEKIMRSVTQEIVKYSPDSIIVVLTNPVDAMTYAVYKESGFPKERVIGQSGVLDTARFRTFVAEELNLSVKDVTGFVLGGHGDDMVPLVRYSYAGGIPLETLIPKERIDAIVERTRKGGGEIVNLLGNGSAYYAPAASLTEMVEAILKDQRRVLPTIAYLEGEYGYEGIYLGVPTIVGGNGLEQIIELELTDYERAQLNKSVESVKNVMKVLS</sequence>
<comment type="function">
    <text evidence="1">Catalyzes the reversible oxidation of malate to oxaloacetate.</text>
</comment>
<comment type="catalytic activity">
    <reaction evidence="1">
        <text>(S)-malate + NAD(+) = oxaloacetate + NADH + H(+)</text>
        <dbReference type="Rhea" id="RHEA:21432"/>
        <dbReference type="ChEBI" id="CHEBI:15378"/>
        <dbReference type="ChEBI" id="CHEBI:15589"/>
        <dbReference type="ChEBI" id="CHEBI:16452"/>
        <dbReference type="ChEBI" id="CHEBI:57540"/>
        <dbReference type="ChEBI" id="CHEBI:57945"/>
        <dbReference type="EC" id="1.1.1.37"/>
    </reaction>
</comment>
<comment type="interaction">
    <interactant intactId="EBI-7827708">
        <id>P49814</id>
    </interactant>
    <interactant intactId="EBI-7829570">
        <id>P39126</id>
        <label>icd</label>
    </interactant>
    <organismsDiffer>false</organismsDiffer>
    <experiments>3</experiments>
</comment>
<comment type="similarity">
    <text evidence="1">Belongs to the LDH/MDH superfamily. MDH type 3 family.</text>
</comment>